<gene>
    <name type="ORF">SPAC922.06</name>
</gene>
<feature type="chain" id="PRO_0000374033" description="Uncharacterized oxidoreductase C922.06">
    <location>
        <begin position="1"/>
        <end position="258"/>
    </location>
</feature>
<feature type="active site" description="Proton donor" evidence="2">
    <location>
        <position position="145"/>
    </location>
</feature>
<feature type="active site" description="Lowers pKa of active site Tyr" evidence="2">
    <location>
        <position position="149"/>
    </location>
</feature>
<feature type="binding site" evidence="1">
    <location>
        <position position="17"/>
    </location>
    <ligand>
        <name>NADP(+)</name>
        <dbReference type="ChEBI" id="CHEBI:58349"/>
    </ligand>
</feature>
<feature type="binding site" evidence="1">
    <location>
        <position position="53"/>
    </location>
    <ligand>
        <name>NADP(+)</name>
        <dbReference type="ChEBI" id="CHEBI:58349"/>
    </ligand>
</feature>
<feature type="binding site" evidence="2">
    <location>
        <position position="80"/>
    </location>
    <ligand>
        <name>NADP(+)</name>
        <dbReference type="ChEBI" id="CHEBI:58349"/>
    </ligand>
</feature>
<feature type="binding site" evidence="1">
    <location>
        <position position="113"/>
    </location>
    <ligand>
        <name>NADP(+)</name>
        <dbReference type="ChEBI" id="CHEBI:58349"/>
    </ligand>
</feature>
<feature type="binding site" evidence="2">
    <location>
        <position position="145"/>
    </location>
    <ligand>
        <name>NADP(+)</name>
        <dbReference type="ChEBI" id="CHEBI:58349"/>
    </ligand>
</feature>
<feature type="binding site" evidence="2">
    <location>
        <position position="149"/>
    </location>
    <ligand>
        <name>NADP(+)</name>
        <dbReference type="ChEBI" id="CHEBI:58349"/>
    </ligand>
</feature>
<feature type="binding site" evidence="2">
    <location>
        <position position="178"/>
    </location>
    <ligand>
        <name>NADP(+)</name>
        <dbReference type="ChEBI" id="CHEBI:58349"/>
    </ligand>
</feature>
<feature type="binding site" evidence="1">
    <location>
        <position position="180"/>
    </location>
    <ligand>
        <name>NADP(+)</name>
        <dbReference type="ChEBI" id="CHEBI:58349"/>
    </ligand>
</feature>
<protein>
    <recommendedName>
        <fullName>Uncharacterized oxidoreductase C922.06</fullName>
        <ecNumber>1.-.-.-</ecNumber>
    </recommendedName>
</protein>
<proteinExistence type="inferred from homology"/>
<sequence>MTVEGRVVLITGAAGGIGKVLCKMFTELGDRVAGIDIVDPSKVQDAALALQADVSKADQIETAIEKVIQTLGPIDVLINNAGLADDTPFEQLSHESWDHDVSLVLRGNYLTQRYVIPHMAKQGKGGSIVNIGSVNGHIYLGSPAYSAAKAGLENLTKALAVRYGPLGIRVNVCAPGTIWSPAWDERFKKHPDVGDRMKRWYPVGRLGTPEDVARAVIFLADSKNSFITGTTLYVDGGLLAGNPCLIQDIYSENNNFVF</sequence>
<comment type="subcellular location">
    <subcellularLocation>
        <location evidence="3">Cytoplasm</location>
    </subcellularLocation>
    <subcellularLocation>
        <location evidence="3">Nucleus</location>
    </subcellularLocation>
</comment>
<comment type="similarity">
    <text evidence="4">Belongs to the short-chain dehydrogenases/reductases (SDR) family.</text>
</comment>
<keyword id="KW-0963">Cytoplasm</keyword>
<keyword id="KW-0521">NADP</keyword>
<keyword id="KW-0539">Nucleus</keyword>
<keyword id="KW-0560">Oxidoreductase</keyword>
<keyword id="KW-1185">Reference proteome</keyword>
<organism>
    <name type="scientific">Schizosaccharomyces pombe (strain 972 / ATCC 24843)</name>
    <name type="common">Fission yeast</name>
    <dbReference type="NCBI Taxonomy" id="284812"/>
    <lineage>
        <taxon>Eukaryota</taxon>
        <taxon>Fungi</taxon>
        <taxon>Dikarya</taxon>
        <taxon>Ascomycota</taxon>
        <taxon>Taphrinomycotina</taxon>
        <taxon>Schizosaccharomycetes</taxon>
        <taxon>Schizosaccharomycetales</taxon>
        <taxon>Schizosaccharomycetaceae</taxon>
        <taxon>Schizosaccharomyces</taxon>
    </lineage>
</organism>
<name>YLX6_SCHPO</name>
<accession>Q9URX0</accession>
<reference key="1">
    <citation type="journal article" date="2002" name="Nature">
        <title>The genome sequence of Schizosaccharomyces pombe.</title>
        <authorList>
            <person name="Wood V."/>
            <person name="Gwilliam R."/>
            <person name="Rajandream M.A."/>
            <person name="Lyne M.H."/>
            <person name="Lyne R."/>
            <person name="Stewart A."/>
            <person name="Sgouros J.G."/>
            <person name="Peat N."/>
            <person name="Hayles J."/>
            <person name="Baker S.G."/>
            <person name="Basham D."/>
            <person name="Bowman S."/>
            <person name="Brooks K."/>
            <person name="Brown D."/>
            <person name="Brown S."/>
            <person name="Chillingworth T."/>
            <person name="Churcher C.M."/>
            <person name="Collins M."/>
            <person name="Connor R."/>
            <person name="Cronin A."/>
            <person name="Davis P."/>
            <person name="Feltwell T."/>
            <person name="Fraser A."/>
            <person name="Gentles S."/>
            <person name="Goble A."/>
            <person name="Hamlin N."/>
            <person name="Harris D.E."/>
            <person name="Hidalgo J."/>
            <person name="Hodgson G."/>
            <person name="Holroyd S."/>
            <person name="Hornsby T."/>
            <person name="Howarth S."/>
            <person name="Huckle E.J."/>
            <person name="Hunt S."/>
            <person name="Jagels K."/>
            <person name="James K.D."/>
            <person name="Jones L."/>
            <person name="Jones M."/>
            <person name="Leather S."/>
            <person name="McDonald S."/>
            <person name="McLean J."/>
            <person name="Mooney P."/>
            <person name="Moule S."/>
            <person name="Mungall K.L."/>
            <person name="Murphy L.D."/>
            <person name="Niblett D."/>
            <person name="Odell C."/>
            <person name="Oliver K."/>
            <person name="O'Neil S."/>
            <person name="Pearson D."/>
            <person name="Quail M.A."/>
            <person name="Rabbinowitsch E."/>
            <person name="Rutherford K.M."/>
            <person name="Rutter S."/>
            <person name="Saunders D."/>
            <person name="Seeger K."/>
            <person name="Sharp S."/>
            <person name="Skelton J."/>
            <person name="Simmonds M.N."/>
            <person name="Squares R."/>
            <person name="Squares S."/>
            <person name="Stevens K."/>
            <person name="Taylor K."/>
            <person name="Taylor R.G."/>
            <person name="Tivey A."/>
            <person name="Walsh S.V."/>
            <person name="Warren T."/>
            <person name="Whitehead S."/>
            <person name="Woodward J.R."/>
            <person name="Volckaert G."/>
            <person name="Aert R."/>
            <person name="Robben J."/>
            <person name="Grymonprez B."/>
            <person name="Weltjens I."/>
            <person name="Vanstreels E."/>
            <person name="Rieger M."/>
            <person name="Schaefer M."/>
            <person name="Mueller-Auer S."/>
            <person name="Gabel C."/>
            <person name="Fuchs M."/>
            <person name="Duesterhoeft A."/>
            <person name="Fritzc C."/>
            <person name="Holzer E."/>
            <person name="Moestl D."/>
            <person name="Hilbert H."/>
            <person name="Borzym K."/>
            <person name="Langer I."/>
            <person name="Beck A."/>
            <person name="Lehrach H."/>
            <person name="Reinhardt R."/>
            <person name="Pohl T.M."/>
            <person name="Eger P."/>
            <person name="Zimmermann W."/>
            <person name="Wedler H."/>
            <person name="Wambutt R."/>
            <person name="Purnelle B."/>
            <person name="Goffeau A."/>
            <person name="Cadieu E."/>
            <person name="Dreano S."/>
            <person name="Gloux S."/>
            <person name="Lelaure V."/>
            <person name="Mottier S."/>
            <person name="Galibert F."/>
            <person name="Aves S.J."/>
            <person name="Xiang Z."/>
            <person name="Hunt C."/>
            <person name="Moore K."/>
            <person name="Hurst S.M."/>
            <person name="Lucas M."/>
            <person name="Rochet M."/>
            <person name="Gaillardin C."/>
            <person name="Tallada V.A."/>
            <person name="Garzon A."/>
            <person name="Thode G."/>
            <person name="Daga R.R."/>
            <person name="Cruzado L."/>
            <person name="Jimenez J."/>
            <person name="Sanchez M."/>
            <person name="del Rey F."/>
            <person name="Benito J."/>
            <person name="Dominguez A."/>
            <person name="Revuelta J.L."/>
            <person name="Moreno S."/>
            <person name="Armstrong J."/>
            <person name="Forsburg S.L."/>
            <person name="Cerutti L."/>
            <person name="Lowe T."/>
            <person name="McCombie W.R."/>
            <person name="Paulsen I."/>
            <person name="Potashkin J."/>
            <person name="Shpakovski G.V."/>
            <person name="Ussery D."/>
            <person name="Barrell B.G."/>
            <person name="Nurse P."/>
        </authorList>
    </citation>
    <scope>NUCLEOTIDE SEQUENCE [LARGE SCALE GENOMIC DNA]</scope>
    <source>
        <strain>972 / ATCC 24843</strain>
    </source>
</reference>
<reference key="2">
    <citation type="journal article" date="2006" name="Nat. Biotechnol.">
        <title>ORFeome cloning and global analysis of protein localization in the fission yeast Schizosaccharomyces pombe.</title>
        <authorList>
            <person name="Matsuyama A."/>
            <person name="Arai R."/>
            <person name="Yashiroda Y."/>
            <person name="Shirai A."/>
            <person name="Kamata A."/>
            <person name="Sekido S."/>
            <person name="Kobayashi Y."/>
            <person name="Hashimoto A."/>
            <person name="Hamamoto M."/>
            <person name="Hiraoka Y."/>
            <person name="Horinouchi S."/>
            <person name="Yoshida M."/>
        </authorList>
    </citation>
    <scope>SUBCELLULAR LOCATION [LARGE SCALE ANALYSIS]</scope>
</reference>
<evidence type="ECO:0000250" key="1">
    <source>
        <dbReference type="UniProtKB" id="L0E2Z4"/>
    </source>
</evidence>
<evidence type="ECO:0000250" key="2">
    <source>
        <dbReference type="UniProtKB" id="O93868"/>
    </source>
</evidence>
<evidence type="ECO:0000269" key="3">
    <source>
    </source>
</evidence>
<evidence type="ECO:0000305" key="4"/>
<dbReference type="EC" id="1.-.-.-"/>
<dbReference type="EMBL" id="CU329670">
    <property type="protein sequence ID" value="CAB63553.1"/>
    <property type="molecule type" value="Genomic_DNA"/>
</dbReference>
<dbReference type="PIR" id="T50271">
    <property type="entry name" value="T50271"/>
</dbReference>
<dbReference type="RefSeq" id="NP_595006.1">
    <property type="nucleotide sequence ID" value="NM_001020437.2"/>
</dbReference>
<dbReference type="SMR" id="Q9URX0"/>
<dbReference type="BioGRID" id="279967">
    <property type="interactions" value="2"/>
</dbReference>
<dbReference type="FunCoup" id="Q9URX0">
    <property type="interactions" value="28"/>
</dbReference>
<dbReference type="STRING" id="284812.Q9URX0"/>
<dbReference type="PaxDb" id="4896-SPAC922.06.1"/>
<dbReference type="EnsemblFungi" id="SPAC922.06.1">
    <property type="protein sequence ID" value="SPAC922.06.1:pep"/>
    <property type="gene ID" value="SPAC922.06"/>
</dbReference>
<dbReference type="KEGG" id="spo:2543550"/>
<dbReference type="PomBase" id="SPAC922.06"/>
<dbReference type="VEuPathDB" id="FungiDB:SPAC922.06"/>
<dbReference type="eggNOG" id="KOG0725">
    <property type="taxonomic scope" value="Eukaryota"/>
</dbReference>
<dbReference type="HOGENOM" id="CLU_010194_1_2_1"/>
<dbReference type="InParanoid" id="Q9URX0"/>
<dbReference type="PhylomeDB" id="Q9URX0"/>
<dbReference type="PRO" id="PR:Q9URX0"/>
<dbReference type="Proteomes" id="UP000002485">
    <property type="component" value="Chromosome I"/>
</dbReference>
<dbReference type="GO" id="GO:0005829">
    <property type="term" value="C:cytosol"/>
    <property type="evidence" value="ECO:0007005"/>
    <property type="project" value="PomBase"/>
</dbReference>
<dbReference type="GO" id="GO:0005634">
    <property type="term" value="C:nucleus"/>
    <property type="evidence" value="ECO:0007005"/>
    <property type="project" value="PomBase"/>
</dbReference>
<dbReference type="GO" id="GO:0004316">
    <property type="term" value="F:3-oxoacyl-[acyl-carrier-protein] reductase (NADPH) activity"/>
    <property type="evidence" value="ECO:0000266"/>
    <property type="project" value="PomBase"/>
</dbReference>
<dbReference type="GO" id="GO:0009107">
    <property type="term" value="P:lipoate biosynthetic process"/>
    <property type="evidence" value="ECO:0000266"/>
    <property type="project" value="PomBase"/>
</dbReference>
<dbReference type="CDD" id="cd05233">
    <property type="entry name" value="SDR_c"/>
    <property type="match status" value="1"/>
</dbReference>
<dbReference type="FunFam" id="3.40.50.720:FF:000173">
    <property type="entry name" value="3-oxoacyl-[acyl-carrier protein] reductase"/>
    <property type="match status" value="1"/>
</dbReference>
<dbReference type="Gene3D" id="3.40.50.720">
    <property type="entry name" value="NAD(P)-binding Rossmann-like Domain"/>
    <property type="match status" value="1"/>
</dbReference>
<dbReference type="InterPro" id="IPR036291">
    <property type="entry name" value="NAD(P)-bd_dom_sf"/>
</dbReference>
<dbReference type="InterPro" id="IPR002347">
    <property type="entry name" value="SDR_fam"/>
</dbReference>
<dbReference type="PANTHER" id="PTHR24321">
    <property type="entry name" value="DEHYDROGENASES, SHORT CHAIN"/>
    <property type="match status" value="1"/>
</dbReference>
<dbReference type="PANTHER" id="PTHR24321:SF8">
    <property type="entry name" value="ESTRADIOL 17-BETA-DEHYDROGENASE 8-RELATED"/>
    <property type="match status" value="1"/>
</dbReference>
<dbReference type="Pfam" id="PF13561">
    <property type="entry name" value="adh_short_C2"/>
    <property type="match status" value="1"/>
</dbReference>
<dbReference type="PRINTS" id="PR00081">
    <property type="entry name" value="GDHRDH"/>
</dbReference>
<dbReference type="PRINTS" id="PR00080">
    <property type="entry name" value="SDRFAMILY"/>
</dbReference>
<dbReference type="SUPFAM" id="SSF51735">
    <property type="entry name" value="NAD(P)-binding Rossmann-fold domains"/>
    <property type="match status" value="1"/>
</dbReference>